<dbReference type="EMBL" id="CU928162">
    <property type="protein sequence ID" value="CAR10108.2"/>
    <property type="molecule type" value="Genomic_DNA"/>
</dbReference>
<dbReference type="RefSeq" id="WP_000062611.1">
    <property type="nucleotide sequence ID" value="NC_011745.1"/>
</dbReference>
<dbReference type="SMR" id="B7N190"/>
<dbReference type="GeneID" id="93778681"/>
<dbReference type="KEGG" id="ecq:ECED1_3969"/>
<dbReference type="HOGENOM" id="CLU_098428_0_0_6"/>
<dbReference type="Proteomes" id="UP000000748">
    <property type="component" value="Chromosome"/>
</dbReference>
<dbReference type="GO" id="GO:1990904">
    <property type="term" value="C:ribonucleoprotein complex"/>
    <property type="evidence" value="ECO:0007669"/>
    <property type="project" value="UniProtKB-KW"/>
</dbReference>
<dbReference type="GO" id="GO:0005840">
    <property type="term" value="C:ribosome"/>
    <property type="evidence" value="ECO:0007669"/>
    <property type="project" value="UniProtKB-KW"/>
</dbReference>
<dbReference type="GO" id="GO:0019843">
    <property type="term" value="F:rRNA binding"/>
    <property type="evidence" value="ECO:0007669"/>
    <property type="project" value="UniProtKB-UniRule"/>
</dbReference>
<dbReference type="GO" id="GO:0003735">
    <property type="term" value="F:structural constituent of ribosome"/>
    <property type="evidence" value="ECO:0007669"/>
    <property type="project" value="InterPro"/>
</dbReference>
<dbReference type="GO" id="GO:0006412">
    <property type="term" value="P:translation"/>
    <property type="evidence" value="ECO:0007669"/>
    <property type="project" value="UniProtKB-UniRule"/>
</dbReference>
<dbReference type="FunFam" id="3.30.1370.30:FF:000003">
    <property type="entry name" value="30S ribosomal protein S8"/>
    <property type="match status" value="1"/>
</dbReference>
<dbReference type="FunFam" id="3.30.1490.10:FF:000001">
    <property type="entry name" value="30S ribosomal protein S8"/>
    <property type="match status" value="1"/>
</dbReference>
<dbReference type="Gene3D" id="3.30.1370.30">
    <property type="match status" value="1"/>
</dbReference>
<dbReference type="Gene3D" id="3.30.1490.10">
    <property type="match status" value="1"/>
</dbReference>
<dbReference type="HAMAP" id="MF_01302_B">
    <property type="entry name" value="Ribosomal_uS8_B"/>
    <property type="match status" value="1"/>
</dbReference>
<dbReference type="InterPro" id="IPR000630">
    <property type="entry name" value="Ribosomal_uS8"/>
</dbReference>
<dbReference type="InterPro" id="IPR047863">
    <property type="entry name" value="Ribosomal_uS8_CS"/>
</dbReference>
<dbReference type="InterPro" id="IPR035987">
    <property type="entry name" value="Ribosomal_uS8_sf"/>
</dbReference>
<dbReference type="NCBIfam" id="NF001109">
    <property type="entry name" value="PRK00136.1"/>
    <property type="match status" value="1"/>
</dbReference>
<dbReference type="PANTHER" id="PTHR11758">
    <property type="entry name" value="40S RIBOSOMAL PROTEIN S15A"/>
    <property type="match status" value="1"/>
</dbReference>
<dbReference type="Pfam" id="PF00410">
    <property type="entry name" value="Ribosomal_S8"/>
    <property type="match status" value="1"/>
</dbReference>
<dbReference type="SUPFAM" id="SSF56047">
    <property type="entry name" value="Ribosomal protein S8"/>
    <property type="match status" value="1"/>
</dbReference>
<dbReference type="PROSITE" id="PS00053">
    <property type="entry name" value="RIBOSOMAL_S8"/>
    <property type="match status" value="1"/>
</dbReference>
<gene>
    <name evidence="1" type="primary">rpsH</name>
    <name type="ordered locus">ECED1_3969</name>
</gene>
<protein>
    <recommendedName>
        <fullName evidence="1">Small ribosomal subunit protein uS8</fullName>
    </recommendedName>
    <alternativeName>
        <fullName evidence="2">30S ribosomal protein S8</fullName>
    </alternativeName>
</protein>
<feature type="chain" id="PRO_1000165332" description="Small ribosomal subunit protein uS8">
    <location>
        <begin position="1"/>
        <end position="130"/>
    </location>
</feature>
<name>RS8_ECO81</name>
<organism>
    <name type="scientific">Escherichia coli O81 (strain ED1a)</name>
    <dbReference type="NCBI Taxonomy" id="585397"/>
    <lineage>
        <taxon>Bacteria</taxon>
        <taxon>Pseudomonadati</taxon>
        <taxon>Pseudomonadota</taxon>
        <taxon>Gammaproteobacteria</taxon>
        <taxon>Enterobacterales</taxon>
        <taxon>Enterobacteriaceae</taxon>
        <taxon>Escherichia</taxon>
    </lineage>
</organism>
<proteinExistence type="inferred from homology"/>
<reference key="1">
    <citation type="journal article" date="2009" name="PLoS Genet.">
        <title>Organised genome dynamics in the Escherichia coli species results in highly diverse adaptive paths.</title>
        <authorList>
            <person name="Touchon M."/>
            <person name="Hoede C."/>
            <person name="Tenaillon O."/>
            <person name="Barbe V."/>
            <person name="Baeriswyl S."/>
            <person name="Bidet P."/>
            <person name="Bingen E."/>
            <person name="Bonacorsi S."/>
            <person name="Bouchier C."/>
            <person name="Bouvet O."/>
            <person name="Calteau A."/>
            <person name="Chiapello H."/>
            <person name="Clermont O."/>
            <person name="Cruveiller S."/>
            <person name="Danchin A."/>
            <person name="Diard M."/>
            <person name="Dossat C."/>
            <person name="Karoui M.E."/>
            <person name="Frapy E."/>
            <person name="Garry L."/>
            <person name="Ghigo J.M."/>
            <person name="Gilles A.M."/>
            <person name="Johnson J."/>
            <person name="Le Bouguenec C."/>
            <person name="Lescat M."/>
            <person name="Mangenot S."/>
            <person name="Martinez-Jehanne V."/>
            <person name="Matic I."/>
            <person name="Nassif X."/>
            <person name="Oztas S."/>
            <person name="Petit M.A."/>
            <person name="Pichon C."/>
            <person name="Rouy Z."/>
            <person name="Ruf C.S."/>
            <person name="Schneider D."/>
            <person name="Tourret J."/>
            <person name="Vacherie B."/>
            <person name="Vallenet D."/>
            <person name="Medigue C."/>
            <person name="Rocha E.P.C."/>
            <person name="Denamur E."/>
        </authorList>
    </citation>
    <scope>NUCLEOTIDE SEQUENCE [LARGE SCALE GENOMIC DNA]</scope>
    <source>
        <strain>ED1a</strain>
    </source>
</reference>
<keyword id="KW-0687">Ribonucleoprotein</keyword>
<keyword id="KW-0689">Ribosomal protein</keyword>
<keyword id="KW-0694">RNA-binding</keyword>
<keyword id="KW-0699">rRNA-binding</keyword>
<accession>B7N190</accession>
<comment type="function">
    <text evidence="1">One of the primary rRNA binding proteins, it binds directly to 16S rRNA central domain where it helps coordinate assembly of the platform of the 30S subunit.</text>
</comment>
<comment type="subunit">
    <text evidence="1">Part of the 30S ribosomal subunit. Contacts proteins S5 and S12.</text>
</comment>
<comment type="similarity">
    <text evidence="1">Belongs to the universal ribosomal protein uS8 family.</text>
</comment>
<evidence type="ECO:0000255" key="1">
    <source>
        <dbReference type="HAMAP-Rule" id="MF_01302"/>
    </source>
</evidence>
<evidence type="ECO:0000305" key="2"/>
<sequence length="130" mass="14127">MSMQDPIADMLTRIRNGQAANKAAVTMPSSKLKVAIANVLKEEGFIEDFKVEGDTKPELELTLKYFQGKAVVESIQRVSRPGLRIYKRKDELPKVMAGLGIAVVSTSKGVMTDRAARQAGLGGEIICYVA</sequence>